<keyword id="KW-0687">Ribonucleoprotein</keyword>
<keyword id="KW-0689">Ribosomal protein</keyword>
<keyword id="KW-0694">RNA-binding</keyword>
<keyword id="KW-0699">rRNA-binding</keyword>
<gene>
    <name evidence="1" type="primary">rplR</name>
    <name type="ordered locus">mma_3395</name>
</gene>
<comment type="function">
    <text evidence="1">This is one of the proteins that bind and probably mediate the attachment of the 5S RNA into the large ribosomal subunit, where it forms part of the central protuberance.</text>
</comment>
<comment type="subunit">
    <text evidence="1">Part of the 50S ribosomal subunit; part of the 5S rRNA/L5/L18/L25 subcomplex. Contacts the 5S and 23S rRNAs.</text>
</comment>
<comment type="similarity">
    <text evidence="1">Belongs to the universal ribosomal protein uL18 family.</text>
</comment>
<name>RL18_JANMA</name>
<feature type="chain" id="PRO_1000053040" description="Large ribosomal subunit protein uL18">
    <location>
        <begin position="1"/>
        <end position="120"/>
    </location>
</feature>
<proteinExistence type="inferred from homology"/>
<protein>
    <recommendedName>
        <fullName evidence="1">Large ribosomal subunit protein uL18</fullName>
    </recommendedName>
    <alternativeName>
        <fullName evidence="2">50S ribosomal protein L18</fullName>
    </alternativeName>
</protein>
<accession>A6T3I8</accession>
<organism>
    <name type="scientific">Janthinobacterium sp. (strain Marseille)</name>
    <name type="common">Minibacterium massiliensis</name>
    <dbReference type="NCBI Taxonomy" id="375286"/>
    <lineage>
        <taxon>Bacteria</taxon>
        <taxon>Pseudomonadati</taxon>
        <taxon>Pseudomonadota</taxon>
        <taxon>Betaproteobacteria</taxon>
        <taxon>Burkholderiales</taxon>
        <taxon>Oxalobacteraceae</taxon>
        <taxon>Janthinobacterium</taxon>
    </lineage>
</organism>
<reference key="1">
    <citation type="journal article" date="2007" name="PLoS Genet.">
        <title>Genome analysis of Minibacterium massiliensis highlights the convergent evolution of water-living bacteria.</title>
        <authorList>
            <person name="Audic S."/>
            <person name="Robert C."/>
            <person name="Campagna B."/>
            <person name="Parinello H."/>
            <person name="Claverie J.-M."/>
            <person name="Raoult D."/>
            <person name="Drancourt M."/>
        </authorList>
    </citation>
    <scope>NUCLEOTIDE SEQUENCE [LARGE SCALE GENOMIC DNA]</scope>
    <source>
        <strain>Marseille</strain>
    </source>
</reference>
<evidence type="ECO:0000255" key="1">
    <source>
        <dbReference type="HAMAP-Rule" id="MF_01337"/>
    </source>
</evidence>
<evidence type="ECO:0000305" key="2"/>
<sequence>MDKKQSRLRRGRQTRAKIAELKVNRLAVHRTNLHIYASIIGPDATVLASASTLEAEVRQELAGQSGKGGNVAAAALVGKRVAEKALKAGIAEVAFDRSGFRYHGRVKAVAEAAREAGLKF</sequence>
<dbReference type="EMBL" id="CP000269">
    <property type="protein sequence ID" value="ABR88905.1"/>
    <property type="molecule type" value="Genomic_DNA"/>
</dbReference>
<dbReference type="RefSeq" id="WP_012081235.1">
    <property type="nucleotide sequence ID" value="NC_009659.1"/>
</dbReference>
<dbReference type="SMR" id="A6T3I8"/>
<dbReference type="STRING" id="375286.mma_3395"/>
<dbReference type="KEGG" id="mms:mma_3395"/>
<dbReference type="eggNOG" id="COG0256">
    <property type="taxonomic scope" value="Bacteria"/>
</dbReference>
<dbReference type="HOGENOM" id="CLU_098841_0_1_4"/>
<dbReference type="OrthoDB" id="9810939at2"/>
<dbReference type="Proteomes" id="UP000006388">
    <property type="component" value="Chromosome"/>
</dbReference>
<dbReference type="GO" id="GO:0022625">
    <property type="term" value="C:cytosolic large ribosomal subunit"/>
    <property type="evidence" value="ECO:0007669"/>
    <property type="project" value="TreeGrafter"/>
</dbReference>
<dbReference type="GO" id="GO:0008097">
    <property type="term" value="F:5S rRNA binding"/>
    <property type="evidence" value="ECO:0007669"/>
    <property type="project" value="TreeGrafter"/>
</dbReference>
<dbReference type="GO" id="GO:0003735">
    <property type="term" value="F:structural constituent of ribosome"/>
    <property type="evidence" value="ECO:0007669"/>
    <property type="project" value="InterPro"/>
</dbReference>
<dbReference type="GO" id="GO:0006412">
    <property type="term" value="P:translation"/>
    <property type="evidence" value="ECO:0007669"/>
    <property type="project" value="UniProtKB-UniRule"/>
</dbReference>
<dbReference type="CDD" id="cd00432">
    <property type="entry name" value="Ribosomal_L18_L5e"/>
    <property type="match status" value="1"/>
</dbReference>
<dbReference type="FunFam" id="3.30.420.100:FF:000001">
    <property type="entry name" value="50S ribosomal protein L18"/>
    <property type="match status" value="1"/>
</dbReference>
<dbReference type="Gene3D" id="3.30.420.100">
    <property type="match status" value="1"/>
</dbReference>
<dbReference type="HAMAP" id="MF_01337_B">
    <property type="entry name" value="Ribosomal_uL18_B"/>
    <property type="match status" value="1"/>
</dbReference>
<dbReference type="InterPro" id="IPR004389">
    <property type="entry name" value="Ribosomal_uL18_bac-type"/>
</dbReference>
<dbReference type="InterPro" id="IPR005484">
    <property type="entry name" value="Ribosomal_uL18_bac/euk"/>
</dbReference>
<dbReference type="NCBIfam" id="TIGR00060">
    <property type="entry name" value="L18_bact"/>
    <property type="match status" value="1"/>
</dbReference>
<dbReference type="PANTHER" id="PTHR12899">
    <property type="entry name" value="39S RIBOSOMAL PROTEIN L18, MITOCHONDRIAL"/>
    <property type="match status" value="1"/>
</dbReference>
<dbReference type="PANTHER" id="PTHR12899:SF3">
    <property type="entry name" value="LARGE RIBOSOMAL SUBUNIT PROTEIN UL18M"/>
    <property type="match status" value="1"/>
</dbReference>
<dbReference type="Pfam" id="PF00861">
    <property type="entry name" value="Ribosomal_L18p"/>
    <property type="match status" value="1"/>
</dbReference>
<dbReference type="SUPFAM" id="SSF53137">
    <property type="entry name" value="Translational machinery components"/>
    <property type="match status" value="1"/>
</dbReference>